<reference key="1">
    <citation type="journal article" date="2000" name="Nature">
        <title>Sequence and analysis of chromosome 1 of the plant Arabidopsis thaliana.</title>
        <authorList>
            <person name="Theologis A."/>
            <person name="Ecker J.R."/>
            <person name="Palm C.J."/>
            <person name="Federspiel N.A."/>
            <person name="Kaul S."/>
            <person name="White O."/>
            <person name="Alonso J."/>
            <person name="Altafi H."/>
            <person name="Araujo R."/>
            <person name="Bowman C.L."/>
            <person name="Brooks S.Y."/>
            <person name="Buehler E."/>
            <person name="Chan A."/>
            <person name="Chao Q."/>
            <person name="Chen H."/>
            <person name="Cheuk R.F."/>
            <person name="Chin C.W."/>
            <person name="Chung M.K."/>
            <person name="Conn L."/>
            <person name="Conway A.B."/>
            <person name="Conway A.R."/>
            <person name="Creasy T.H."/>
            <person name="Dewar K."/>
            <person name="Dunn P."/>
            <person name="Etgu P."/>
            <person name="Feldblyum T.V."/>
            <person name="Feng J.-D."/>
            <person name="Fong B."/>
            <person name="Fujii C.Y."/>
            <person name="Gill J.E."/>
            <person name="Goldsmith A.D."/>
            <person name="Haas B."/>
            <person name="Hansen N.F."/>
            <person name="Hughes B."/>
            <person name="Huizar L."/>
            <person name="Hunter J.L."/>
            <person name="Jenkins J."/>
            <person name="Johnson-Hopson C."/>
            <person name="Khan S."/>
            <person name="Khaykin E."/>
            <person name="Kim C.J."/>
            <person name="Koo H.L."/>
            <person name="Kremenetskaia I."/>
            <person name="Kurtz D.B."/>
            <person name="Kwan A."/>
            <person name="Lam B."/>
            <person name="Langin-Hooper S."/>
            <person name="Lee A."/>
            <person name="Lee J.M."/>
            <person name="Lenz C.A."/>
            <person name="Li J.H."/>
            <person name="Li Y.-P."/>
            <person name="Lin X."/>
            <person name="Liu S.X."/>
            <person name="Liu Z.A."/>
            <person name="Luros J.S."/>
            <person name="Maiti R."/>
            <person name="Marziali A."/>
            <person name="Militscher J."/>
            <person name="Miranda M."/>
            <person name="Nguyen M."/>
            <person name="Nierman W.C."/>
            <person name="Osborne B.I."/>
            <person name="Pai G."/>
            <person name="Peterson J."/>
            <person name="Pham P.K."/>
            <person name="Rizzo M."/>
            <person name="Rooney T."/>
            <person name="Rowley D."/>
            <person name="Sakano H."/>
            <person name="Salzberg S.L."/>
            <person name="Schwartz J.R."/>
            <person name="Shinn P."/>
            <person name="Southwick A.M."/>
            <person name="Sun H."/>
            <person name="Tallon L.J."/>
            <person name="Tambunga G."/>
            <person name="Toriumi M.J."/>
            <person name="Town C.D."/>
            <person name="Utterback T."/>
            <person name="Van Aken S."/>
            <person name="Vaysberg M."/>
            <person name="Vysotskaia V.S."/>
            <person name="Walker M."/>
            <person name="Wu D."/>
            <person name="Yu G."/>
            <person name="Fraser C.M."/>
            <person name="Venter J.C."/>
            <person name="Davis R.W."/>
        </authorList>
    </citation>
    <scope>NUCLEOTIDE SEQUENCE [LARGE SCALE GENOMIC DNA] (AT1G57660 AND AT1G57860)</scope>
    <source>
        <strain>cv. Columbia</strain>
    </source>
</reference>
<reference key="2">
    <citation type="journal article" date="2017" name="Plant J.">
        <title>Araport11: a complete reannotation of the Arabidopsis thaliana reference genome.</title>
        <authorList>
            <person name="Cheng C.Y."/>
            <person name="Krishnakumar V."/>
            <person name="Chan A.P."/>
            <person name="Thibaud-Nissen F."/>
            <person name="Schobel S."/>
            <person name="Town C.D."/>
        </authorList>
    </citation>
    <scope>GENOME REANNOTATION</scope>
    <source>
        <strain>cv. Columbia</strain>
    </source>
</reference>
<reference key="3">
    <citation type="journal article" date="2003" name="Science">
        <title>Empirical analysis of transcriptional activity in the Arabidopsis genome.</title>
        <authorList>
            <person name="Yamada K."/>
            <person name="Lim J."/>
            <person name="Dale J.M."/>
            <person name="Chen H."/>
            <person name="Shinn P."/>
            <person name="Palm C.J."/>
            <person name="Southwick A.M."/>
            <person name="Wu H.C."/>
            <person name="Kim C.J."/>
            <person name="Nguyen M."/>
            <person name="Pham P.K."/>
            <person name="Cheuk R.F."/>
            <person name="Karlin-Newmann G."/>
            <person name="Liu S.X."/>
            <person name="Lam B."/>
            <person name="Sakano H."/>
            <person name="Wu T."/>
            <person name="Yu G."/>
            <person name="Miranda M."/>
            <person name="Quach H.L."/>
            <person name="Tripp M."/>
            <person name="Chang C.H."/>
            <person name="Lee J.M."/>
            <person name="Toriumi M.J."/>
            <person name="Chan M.M."/>
            <person name="Tang C.C."/>
            <person name="Onodera C.S."/>
            <person name="Deng J.M."/>
            <person name="Akiyama K."/>
            <person name="Ansari Y."/>
            <person name="Arakawa T."/>
            <person name="Banh J."/>
            <person name="Banno F."/>
            <person name="Bowser L."/>
            <person name="Brooks S.Y."/>
            <person name="Carninci P."/>
            <person name="Chao Q."/>
            <person name="Choy N."/>
            <person name="Enju A."/>
            <person name="Goldsmith A.D."/>
            <person name="Gurjal M."/>
            <person name="Hansen N.F."/>
            <person name="Hayashizaki Y."/>
            <person name="Johnson-Hopson C."/>
            <person name="Hsuan V.W."/>
            <person name="Iida K."/>
            <person name="Karnes M."/>
            <person name="Khan S."/>
            <person name="Koesema E."/>
            <person name="Ishida J."/>
            <person name="Jiang P.X."/>
            <person name="Jones T."/>
            <person name="Kawai J."/>
            <person name="Kamiya A."/>
            <person name="Meyers C."/>
            <person name="Nakajima M."/>
            <person name="Narusaka M."/>
            <person name="Seki M."/>
            <person name="Sakurai T."/>
            <person name="Satou M."/>
            <person name="Tamse R."/>
            <person name="Vaysberg M."/>
            <person name="Wallender E.K."/>
            <person name="Wong C."/>
            <person name="Yamamura Y."/>
            <person name="Yuan S."/>
            <person name="Shinozaki K."/>
            <person name="Davis R.W."/>
            <person name="Theologis A."/>
            <person name="Ecker J.R."/>
        </authorList>
    </citation>
    <scope>NUCLEOTIDE SEQUENCE [LARGE SCALE MRNA] (AT1G57660 AND AT1G57860)</scope>
    <source>
        <strain>cv. Columbia</strain>
    </source>
</reference>
<reference key="4">
    <citation type="submission" date="2002-03" db="EMBL/GenBank/DDBJ databases">
        <title>Full-length cDNA from Arabidopsis thaliana.</title>
        <authorList>
            <person name="Brover V.V."/>
            <person name="Troukhan M.E."/>
            <person name="Alexandrov N.A."/>
            <person name="Lu Y.-P."/>
            <person name="Flavell R.B."/>
            <person name="Feldmann K.A."/>
        </authorList>
    </citation>
    <scope>NUCLEOTIDE SEQUENCE [LARGE SCALE MRNA] (AT1G57660)</scope>
</reference>
<reference key="5">
    <citation type="journal article" date="1996" name="Plant J.">
        <title>Further progress towards a catalogue of all Arabidopsis genes: analysis of a set of 5000 non-redundant ESTs.</title>
        <authorList>
            <person name="Cooke R."/>
            <person name="Raynal M."/>
            <person name="Laudie M."/>
            <person name="Grellet F."/>
            <person name="Delseny M."/>
            <person name="Morris P.-C."/>
            <person name="Guerrier D."/>
            <person name="Giraudat J."/>
            <person name="Quigley F."/>
            <person name="Clabault G."/>
            <person name="Li Y.-F."/>
            <person name="Mache R."/>
            <person name="Krivitzky M."/>
            <person name="Gy I.J.-J."/>
            <person name="Kreis M."/>
            <person name="Lecharny A."/>
            <person name="Parmentier Y."/>
            <person name="Marbach J."/>
            <person name="Fleck J."/>
            <person name="Clement B."/>
            <person name="Philipps G."/>
            <person name="Herve C."/>
            <person name="Bardet C."/>
            <person name="Tremousaygue D."/>
            <person name="Lescure B."/>
            <person name="Lacomme C."/>
            <person name="Roby D."/>
            <person name="Jourjon M.-F."/>
            <person name="Chabrier P."/>
            <person name="Charpenteau J.-L."/>
            <person name="Desprez T."/>
            <person name="Amselem J."/>
            <person name="Chiapello H."/>
            <person name="Hoefte H."/>
        </authorList>
    </citation>
    <scope>NUCLEOTIDE SEQUENCE [LARGE SCALE MRNA] OF 4-104 (AT1G57860)</scope>
    <source>
        <strain>cv. Columbia</strain>
    </source>
</reference>
<reference key="6">
    <citation type="journal article" date="2001" name="Plant Physiol.">
        <title>The organization of cytoplasmic ribosomal protein genes in the Arabidopsis genome.</title>
        <authorList>
            <person name="Barakat A."/>
            <person name="Szick-Miranda K."/>
            <person name="Chang I.-F."/>
            <person name="Guyot R."/>
            <person name="Blanc G."/>
            <person name="Cooke R."/>
            <person name="Delseny M."/>
            <person name="Bailey-Serres J."/>
        </authorList>
    </citation>
    <scope>GENE FAMILY ORGANIZATION</scope>
    <scope>NOMENCLATURE</scope>
</reference>
<reference key="7">
    <citation type="journal article" date="2023" name="Plant Cell">
        <title>An updated nomenclature for plant ribosomal protein genes.</title>
        <authorList>
            <person name="Scarpin M.R."/>
            <person name="Busche M."/>
            <person name="Martinez R.E."/>
            <person name="Harper L.C."/>
            <person name="Reiser L."/>
            <person name="Szakonyi D."/>
            <person name="Merchante C."/>
            <person name="Lan T."/>
            <person name="Xiong W."/>
            <person name="Mo B."/>
            <person name="Tang G."/>
            <person name="Chen X."/>
            <person name="Bailey-Serres J."/>
            <person name="Browning K.S."/>
            <person name="Brunkard J.O."/>
        </authorList>
    </citation>
    <scope>NOMENCLATURE</scope>
</reference>
<protein>
    <recommendedName>
        <fullName evidence="1">Large ribosomal subunit protein eL21x/eL21w</fullName>
    </recommendedName>
    <alternativeName>
        <fullName>60S ribosomal protein L21-2</fullName>
    </alternativeName>
</protein>
<organism>
    <name type="scientific">Arabidopsis thaliana</name>
    <name type="common">Mouse-ear cress</name>
    <dbReference type="NCBI Taxonomy" id="3702"/>
    <lineage>
        <taxon>Eukaryota</taxon>
        <taxon>Viridiplantae</taxon>
        <taxon>Streptophyta</taxon>
        <taxon>Embryophyta</taxon>
        <taxon>Tracheophyta</taxon>
        <taxon>Spermatophyta</taxon>
        <taxon>Magnoliopsida</taxon>
        <taxon>eudicotyledons</taxon>
        <taxon>Gunneridae</taxon>
        <taxon>Pentapetalae</taxon>
        <taxon>rosids</taxon>
        <taxon>malvids</taxon>
        <taxon>Brassicales</taxon>
        <taxon>Brassicaceae</taxon>
        <taxon>Camelineae</taxon>
        <taxon>Arabidopsis</taxon>
    </lineage>
</organism>
<name>RL212_ARATH</name>
<feature type="chain" id="PRO_0000240588" description="Large ribosomal subunit protein eL21x/eL21w">
    <location>
        <begin position="1"/>
        <end position="164"/>
    </location>
</feature>
<sequence length="164" mass="18709">MPAGHGVRARTRDLFARPFRKKGYIPLSTYLRTFKVGDYVDVKVNGAIHKGMPHKFYHGRTGRIWNVTKRAVGVEVNKQIGNRIIRKRIHVRVEHVQQSRCAEEFKLRKKQNDVLKADAKARGETISTKRQPKGPKPGFMVEGMTLETVTPIPYDVVNDLKGGY</sequence>
<accession>Q9FDZ9</accession>
<proteinExistence type="evidence at transcript level"/>
<keyword id="KW-1185">Reference proteome</keyword>
<keyword id="KW-0687">Ribonucleoprotein</keyword>
<keyword id="KW-0689">Ribosomal protein</keyword>
<dbReference type="EMBL" id="AC079733">
    <property type="protein sequence ID" value="AAG50742.1"/>
    <property type="molecule type" value="Genomic_DNA"/>
</dbReference>
<dbReference type="EMBL" id="AC079732">
    <property type="protein sequence ID" value="AAG29235.1"/>
    <property type="molecule type" value="Genomic_DNA"/>
</dbReference>
<dbReference type="EMBL" id="CP002684">
    <property type="protein sequence ID" value="AEE33449.1"/>
    <property type="molecule type" value="Genomic_DNA"/>
</dbReference>
<dbReference type="EMBL" id="CP002684">
    <property type="protein sequence ID" value="AEE33474.1"/>
    <property type="molecule type" value="Genomic_DNA"/>
</dbReference>
<dbReference type="EMBL" id="AY050840">
    <property type="protein sequence ID" value="AAK92775.1"/>
    <property type="molecule type" value="mRNA"/>
</dbReference>
<dbReference type="EMBL" id="AY091167">
    <property type="protein sequence ID" value="AAM14106.1"/>
    <property type="molecule type" value="mRNA"/>
</dbReference>
<dbReference type="EMBL" id="BT004794">
    <property type="protein sequence ID" value="AAO44060.1"/>
    <property type="molecule type" value="mRNA"/>
</dbReference>
<dbReference type="EMBL" id="AY086851">
    <property type="protein sequence ID" value="AAM63899.1"/>
    <property type="molecule type" value="mRNA"/>
</dbReference>
<dbReference type="EMBL" id="F20014">
    <property type="protein sequence ID" value="CAA23380.1"/>
    <property type="molecule type" value="mRNA"/>
</dbReference>
<dbReference type="PIR" id="H96610">
    <property type="entry name" value="H96610"/>
</dbReference>
<dbReference type="RefSeq" id="NP_564724.1">
    <property type="nucleotide sequence ID" value="NM_104563.4"/>
</dbReference>
<dbReference type="RefSeq" id="NP_564726.1">
    <property type="nucleotide sequence ID" value="NM_104579.4"/>
</dbReference>
<dbReference type="SMR" id="Q9FDZ9"/>
<dbReference type="BioGRID" id="27367">
    <property type="interactions" value="157"/>
</dbReference>
<dbReference type="BioGRID" id="27386">
    <property type="interactions" value="152"/>
</dbReference>
<dbReference type="FunCoup" id="Q9FDZ9">
    <property type="interactions" value="3041"/>
</dbReference>
<dbReference type="IntAct" id="Q9FDZ9">
    <property type="interactions" value="1"/>
</dbReference>
<dbReference type="STRING" id="3702.Q9FDZ9"/>
<dbReference type="PaxDb" id="3702-AT1G57660.1"/>
<dbReference type="ProteomicsDB" id="226361"/>
<dbReference type="EnsemblPlants" id="AT1G57660.1">
    <property type="protein sequence ID" value="AT1G57660.1"/>
    <property type="gene ID" value="AT1G57660"/>
</dbReference>
<dbReference type="EnsemblPlants" id="AT1G57860.1">
    <property type="protein sequence ID" value="AT1G57860.1"/>
    <property type="gene ID" value="AT1G57860"/>
</dbReference>
<dbReference type="GeneID" id="842142"/>
<dbReference type="GeneID" id="842161"/>
<dbReference type="Gramene" id="AT1G57660.1">
    <property type="protein sequence ID" value="AT1G57660.1"/>
    <property type="gene ID" value="AT1G57660"/>
</dbReference>
<dbReference type="Gramene" id="AT1G57860.1">
    <property type="protein sequence ID" value="AT1G57860.1"/>
    <property type="gene ID" value="AT1G57860"/>
</dbReference>
<dbReference type="KEGG" id="ath:AT1G57660"/>
<dbReference type="KEGG" id="ath:AT1G57860"/>
<dbReference type="Araport" id="AT1G57660"/>
<dbReference type="Araport" id="AT1G57860"/>
<dbReference type="TAIR" id="AT1G57660"/>
<dbReference type="TAIR" id="AT1G57860"/>
<dbReference type="eggNOG" id="KOG1732">
    <property type="taxonomic scope" value="Eukaryota"/>
</dbReference>
<dbReference type="HOGENOM" id="CLU_103610_0_1_1"/>
<dbReference type="InParanoid" id="Q9FDZ9"/>
<dbReference type="OMA" id="INYGDYV"/>
<dbReference type="OrthoDB" id="1027796at2759"/>
<dbReference type="PhylomeDB" id="Q9FDZ9"/>
<dbReference type="PRO" id="PR:Q9FDZ9"/>
<dbReference type="Proteomes" id="UP000006548">
    <property type="component" value="Chromosome 1"/>
</dbReference>
<dbReference type="ExpressionAtlas" id="Q9FDZ9">
    <property type="expression patterns" value="baseline and differential"/>
</dbReference>
<dbReference type="GO" id="GO:0022625">
    <property type="term" value="C:cytosolic large ribosomal subunit"/>
    <property type="evidence" value="ECO:0007005"/>
    <property type="project" value="TAIR"/>
</dbReference>
<dbReference type="GO" id="GO:0005634">
    <property type="term" value="C:nucleus"/>
    <property type="evidence" value="ECO:0007005"/>
    <property type="project" value="TAIR"/>
</dbReference>
<dbReference type="GO" id="GO:0003735">
    <property type="term" value="F:structural constituent of ribosome"/>
    <property type="evidence" value="ECO:0000314"/>
    <property type="project" value="CAFA"/>
</dbReference>
<dbReference type="GO" id="GO:0006412">
    <property type="term" value="P:translation"/>
    <property type="evidence" value="ECO:0007669"/>
    <property type="project" value="InterPro"/>
</dbReference>
<dbReference type="FunFam" id="2.30.30.70:FF:000001">
    <property type="entry name" value="60S ribosomal protein L21"/>
    <property type="match status" value="1"/>
</dbReference>
<dbReference type="FunFam" id="6.10.250.3260:FF:000002">
    <property type="entry name" value="60S ribosomal protein L21"/>
    <property type="match status" value="1"/>
</dbReference>
<dbReference type="Gene3D" id="6.10.250.3260">
    <property type="match status" value="1"/>
</dbReference>
<dbReference type="Gene3D" id="2.30.30.70">
    <property type="entry name" value="Ribosomal protein L21"/>
    <property type="match status" value="1"/>
</dbReference>
<dbReference type="InterPro" id="IPR001147">
    <property type="entry name" value="Ribosomal_eL21"/>
</dbReference>
<dbReference type="InterPro" id="IPR018259">
    <property type="entry name" value="Ribosomal_eL21_CS"/>
</dbReference>
<dbReference type="InterPro" id="IPR036948">
    <property type="entry name" value="Ribosomal_eL21_sf"/>
</dbReference>
<dbReference type="InterPro" id="IPR008991">
    <property type="entry name" value="Translation_prot_SH3-like_sf"/>
</dbReference>
<dbReference type="PANTHER" id="PTHR20981">
    <property type="entry name" value="60S RIBOSOMAL PROTEIN L21"/>
    <property type="match status" value="1"/>
</dbReference>
<dbReference type="Pfam" id="PF01157">
    <property type="entry name" value="Ribosomal_L21e"/>
    <property type="match status" value="1"/>
</dbReference>
<dbReference type="SUPFAM" id="SSF50104">
    <property type="entry name" value="Translation proteins SH3-like domain"/>
    <property type="match status" value="1"/>
</dbReference>
<dbReference type="PROSITE" id="PS01171">
    <property type="entry name" value="RIBOSOMAL_L21E"/>
    <property type="match status" value="1"/>
</dbReference>
<evidence type="ECO:0000303" key="1">
    <source>
    </source>
</evidence>
<evidence type="ECO:0000305" key="2"/>
<comment type="similarity">
    <text evidence="2">Belongs to the eukaryotic ribosomal protein eL21 family.</text>
</comment>
<gene>
    <name type="primary">RPL21E</name>
    <name type="ordered locus">At1g57660</name>
    <name type="ORF">T8L23.13</name>
</gene>
<gene>
    <name type="primary">RPL21F</name>
    <name type="ordered locus">At1g57860</name>
    <name type="ORF">F12K22.19</name>
</gene>